<name>CYB_LEPCO</name>
<gene>
    <name type="primary">MT-CYB</name>
    <name type="synonym">COB</name>
    <name type="synonym">CYTB</name>
    <name type="synonym">MTCYB</name>
</gene>
<accession>O48350</accession>
<feature type="chain" id="PRO_0000061102" description="Cytochrome b">
    <location>
        <begin position="1"/>
        <end position="234" status="greater than"/>
    </location>
</feature>
<feature type="transmembrane region" description="Helical" evidence="2">
    <location>
        <begin position="33"/>
        <end position="53"/>
    </location>
</feature>
<feature type="transmembrane region" description="Helical" evidence="2">
    <location>
        <begin position="77"/>
        <end position="98"/>
    </location>
</feature>
<feature type="transmembrane region" description="Helical" evidence="2">
    <location>
        <begin position="113"/>
        <end position="133"/>
    </location>
</feature>
<feature type="transmembrane region" description="Helical" evidence="2">
    <location>
        <begin position="178"/>
        <end position="198"/>
    </location>
</feature>
<feature type="transmembrane region" description="Helical" evidence="2">
    <location>
        <begin position="226"/>
        <end position="234" status="greater than"/>
    </location>
</feature>
<feature type="binding site" description="axial binding residue" evidence="2">
    <location>
        <position position="83"/>
    </location>
    <ligand>
        <name>heme b</name>
        <dbReference type="ChEBI" id="CHEBI:60344"/>
        <label>b562</label>
    </ligand>
    <ligandPart>
        <name>Fe</name>
        <dbReference type="ChEBI" id="CHEBI:18248"/>
    </ligandPart>
</feature>
<feature type="binding site" description="axial binding residue" evidence="2">
    <location>
        <position position="97"/>
    </location>
    <ligand>
        <name>heme b</name>
        <dbReference type="ChEBI" id="CHEBI:60344"/>
        <label>b566</label>
    </ligand>
    <ligandPart>
        <name>Fe</name>
        <dbReference type="ChEBI" id="CHEBI:18248"/>
    </ligandPart>
</feature>
<feature type="binding site" description="axial binding residue" evidence="2">
    <location>
        <position position="182"/>
    </location>
    <ligand>
        <name>heme b</name>
        <dbReference type="ChEBI" id="CHEBI:60344"/>
        <label>b562</label>
    </ligand>
    <ligandPart>
        <name>Fe</name>
        <dbReference type="ChEBI" id="CHEBI:18248"/>
    </ligandPart>
</feature>
<feature type="binding site" description="axial binding residue" evidence="2">
    <location>
        <position position="196"/>
    </location>
    <ligand>
        <name>heme b</name>
        <dbReference type="ChEBI" id="CHEBI:60344"/>
        <label>b566</label>
    </ligand>
    <ligandPart>
        <name>Fe</name>
        <dbReference type="ChEBI" id="CHEBI:18248"/>
    </ligandPart>
</feature>
<feature type="binding site" evidence="2">
    <location>
        <position position="201"/>
    </location>
    <ligand>
        <name>a ubiquinone</name>
        <dbReference type="ChEBI" id="CHEBI:16389"/>
    </ligand>
</feature>
<feature type="non-terminal residue">
    <location>
        <position position="234"/>
    </location>
</feature>
<evidence type="ECO:0000250" key="1"/>
<evidence type="ECO:0000250" key="2">
    <source>
        <dbReference type="UniProtKB" id="P00157"/>
    </source>
</evidence>
<evidence type="ECO:0000255" key="3">
    <source>
        <dbReference type="PROSITE-ProRule" id="PRU00967"/>
    </source>
</evidence>
<evidence type="ECO:0000255" key="4">
    <source>
        <dbReference type="PROSITE-ProRule" id="PRU00968"/>
    </source>
</evidence>
<comment type="function">
    <text evidence="2">Component of the ubiquinol-cytochrome c reductase complex (complex III or cytochrome b-c1 complex) that is part of the mitochondrial respiratory chain. The b-c1 complex mediates electron transfer from ubiquinol to cytochrome c. Contributes to the generation of a proton gradient across the mitochondrial membrane that is then used for ATP synthesis.</text>
</comment>
<comment type="cofactor">
    <cofactor evidence="2">
        <name>heme b</name>
        <dbReference type="ChEBI" id="CHEBI:60344"/>
    </cofactor>
    <text evidence="2">Binds 2 heme b groups non-covalently.</text>
</comment>
<comment type="subunit">
    <text evidence="2">The cytochrome bc1 complex contains 11 subunits: 3 respiratory subunits (MT-CYB, CYC1 and UQCRFS1), 2 core proteins (UQCRC1 and UQCRC2) and 6 low-molecular weight proteins (UQCRH/QCR6, UQCRB/QCR7, UQCRQ/QCR8, UQCR10/QCR9, UQCR11/QCR10 and a cleavage product of UQCRFS1). This cytochrome bc1 complex then forms a dimer.</text>
</comment>
<comment type="subcellular location">
    <subcellularLocation>
        <location evidence="2">Mitochondrion inner membrane</location>
        <topology evidence="2">Multi-pass membrane protein</topology>
    </subcellularLocation>
</comment>
<comment type="miscellaneous">
    <text evidence="1">Heme 1 (or BL or b562) is low-potential and absorbs at about 562 nm, and heme 2 (or BH or b566) is high-potential and absorbs at about 566 nm.</text>
</comment>
<comment type="similarity">
    <text evidence="3 4">Belongs to the cytochrome b family.</text>
</comment>
<comment type="caution">
    <text evidence="2">The full-length protein contains only eight transmembrane helices, not nine as predicted by bioinformatics tools.</text>
</comment>
<sequence length="234" mass="26409">MTNIRKTHPLLKIVNHSLIDLPAPSNISAWWNFGSLLGLCLMIQILTGLFLAMHYTSDTATAFSSVTHICRDVNYGWLIRYLHANGASMFFICLYMHVGRGIYYGSYTYLETWNIGIILLFAVMATAFMGYVLPWGQMSFWGATVITNLLSAIPYIGTTLVEWIWGGFSVDKATLTRFFAFHFILPFIIAALVMIHLLFLHETGSNNPSGIPSDSDKIPFHPYYTIKDVLGFLM</sequence>
<proteinExistence type="inferred from homology"/>
<organism>
    <name type="scientific">Lepus callotis</name>
    <name type="common">White-sided jackrabbit</name>
    <dbReference type="NCBI Taxonomy" id="62619"/>
    <lineage>
        <taxon>Eukaryota</taxon>
        <taxon>Metazoa</taxon>
        <taxon>Chordata</taxon>
        <taxon>Craniata</taxon>
        <taxon>Vertebrata</taxon>
        <taxon>Euteleostomi</taxon>
        <taxon>Mammalia</taxon>
        <taxon>Eutheria</taxon>
        <taxon>Euarchontoglires</taxon>
        <taxon>Glires</taxon>
        <taxon>Lagomorpha</taxon>
        <taxon>Leporidae</taxon>
        <taxon>Lepus</taxon>
    </lineage>
</organism>
<geneLocation type="mitochondrion"/>
<keyword id="KW-0249">Electron transport</keyword>
<keyword id="KW-0349">Heme</keyword>
<keyword id="KW-0408">Iron</keyword>
<keyword id="KW-0472">Membrane</keyword>
<keyword id="KW-0479">Metal-binding</keyword>
<keyword id="KW-0496">Mitochondrion</keyword>
<keyword id="KW-0999">Mitochondrion inner membrane</keyword>
<keyword id="KW-0679">Respiratory chain</keyword>
<keyword id="KW-0812">Transmembrane</keyword>
<keyword id="KW-1133">Transmembrane helix</keyword>
<keyword id="KW-0813">Transport</keyword>
<keyword id="KW-0830">Ubiquinone</keyword>
<dbReference type="EMBL" id="AF010158">
    <property type="protein sequence ID" value="AAB94498.1"/>
    <property type="molecule type" value="Genomic_DNA"/>
</dbReference>
<dbReference type="EMBL" id="AF010159">
    <property type="protein sequence ID" value="AAB94499.1"/>
    <property type="molecule type" value="Genomic_DNA"/>
</dbReference>
<dbReference type="SMR" id="O48350"/>
<dbReference type="GO" id="GO:0005743">
    <property type="term" value="C:mitochondrial inner membrane"/>
    <property type="evidence" value="ECO:0007669"/>
    <property type="project" value="UniProtKB-SubCell"/>
</dbReference>
<dbReference type="GO" id="GO:0046872">
    <property type="term" value="F:metal ion binding"/>
    <property type="evidence" value="ECO:0007669"/>
    <property type="project" value="UniProtKB-KW"/>
</dbReference>
<dbReference type="GO" id="GO:0008121">
    <property type="term" value="F:ubiquinol-cytochrome-c reductase activity"/>
    <property type="evidence" value="ECO:0007669"/>
    <property type="project" value="TreeGrafter"/>
</dbReference>
<dbReference type="GO" id="GO:0006122">
    <property type="term" value="P:mitochondrial electron transport, ubiquinol to cytochrome c"/>
    <property type="evidence" value="ECO:0007669"/>
    <property type="project" value="TreeGrafter"/>
</dbReference>
<dbReference type="CDD" id="cd00284">
    <property type="entry name" value="Cytochrome_b_N"/>
    <property type="match status" value="1"/>
</dbReference>
<dbReference type="Gene3D" id="1.20.810.10">
    <property type="entry name" value="Cytochrome Bc1 Complex, Chain C"/>
    <property type="match status" value="1"/>
</dbReference>
<dbReference type="InterPro" id="IPR005798">
    <property type="entry name" value="Cyt_b/b6_C"/>
</dbReference>
<dbReference type="InterPro" id="IPR005797">
    <property type="entry name" value="Cyt_b/b6_N"/>
</dbReference>
<dbReference type="InterPro" id="IPR027387">
    <property type="entry name" value="Cytb/b6-like_sf"/>
</dbReference>
<dbReference type="InterPro" id="IPR048259">
    <property type="entry name" value="Cytochrome_b_N_euk/bac"/>
</dbReference>
<dbReference type="InterPro" id="IPR016174">
    <property type="entry name" value="Di-haem_cyt_TM"/>
</dbReference>
<dbReference type="PANTHER" id="PTHR19271">
    <property type="entry name" value="CYTOCHROME B"/>
    <property type="match status" value="1"/>
</dbReference>
<dbReference type="PANTHER" id="PTHR19271:SF16">
    <property type="entry name" value="CYTOCHROME B"/>
    <property type="match status" value="1"/>
</dbReference>
<dbReference type="Pfam" id="PF00033">
    <property type="entry name" value="Cytochrome_B"/>
    <property type="match status" value="1"/>
</dbReference>
<dbReference type="PIRSF" id="PIRSF000032">
    <property type="entry name" value="Cytochrome_b6"/>
    <property type="match status" value="1"/>
</dbReference>
<dbReference type="SUPFAM" id="SSF81342">
    <property type="entry name" value="Transmembrane di-heme cytochromes"/>
    <property type="match status" value="1"/>
</dbReference>
<dbReference type="PROSITE" id="PS51003">
    <property type="entry name" value="CYTB_CTER"/>
    <property type="match status" value="1"/>
</dbReference>
<dbReference type="PROSITE" id="PS51002">
    <property type="entry name" value="CYTB_NTER"/>
    <property type="match status" value="1"/>
</dbReference>
<reference key="1">
    <citation type="submission" date="1998-01" db="EMBL/GenBank/DDBJ databases">
        <title>Cytochrome b phylogeny of North American hares and jackrabbits (Lepus, Lagomorpha) and the effects of mutational saturation in outgroup taxa.</title>
        <authorList>
            <person name="Halanych K.M."/>
            <person name="Demboski J.R."/>
            <person name="van Vuuren B.J."/>
            <person name="Klein D.R."/>
            <person name="Cook J.A."/>
        </authorList>
    </citation>
    <scope>NUCLEOTIDE SEQUENCE [GENOMIC DNA]</scope>
    <source>
        <strain>Isolate NK 3800</strain>
        <strain>Isolate NK 5014</strain>
    </source>
</reference>
<protein>
    <recommendedName>
        <fullName>Cytochrome b</fullName>
    </recommendedName>
    <alternativeName>
        <fullName>Complex III subunit 3</fullName>
    </alternativeName>
    <alternativeName>
        <fullName>Complex III subunit III</fullName>
    </alternativeName>
    <alternativeName>
        <fullName>Cytochrome b-c1 complex subunit 3</fullName>
    </alternativeName>
    <alternativeName>
        <fullName>Ubiquinol-cytochrome-c reductase complex cytochrome b subunit</fullName>
    </alternativeName>
</protein>